<keyword id="KW-0012">Acyltransferase</keyword>
<keyword id="KW-1283">Bacterial microcompartment</keyword>
<keyword id="KW-0479">Metal-binding</keyword>
<keyword id="KW-0808">Transferase</keyword>
<keyword id="KW-0862">Zinc</keyword>
<protein>
    <recommendedName>
        <fullName>Phosphate propanoyltransferase</fullName>
        <ecNumber>2.3.1.222</ecNumber>
    </recommendedName>
    <alternativeName>
        <fullName>Phosphate acyltransferase PduL</fullName>
    </alternativeName>
    <alternativeName>
        <fullName>Phosphotransacylase PduL</fullName>
        <shortName>PTAC</shortName>
    </alternativeName>
    <alternativeName>
        <fullName>Propanediol utilization protein PduL</fullName>
    </alternativeName>
</protein>
<accession>A4Y1V6</accession>
<proteinExistence type="inferred from homology"/>
<organism>
    <name type="scientific">Shewanella putrefaciens (strain CN-32 / ATCC BAA-453)</name>
    <dbReference type="NCBI Taxonomy" id="319224"/>
    <lineage>
        <taxon>Bacteria</taxon>
        <taxon>Pseudomonadati</taxon>
        <taxon>Pseudomonadota</taxon>
        <taxon>Gammaproteobacteria</taxon>
        <taxon>Alteromonadales</taxon>
        <taxon>Shewanellaceae</taxon>
        <taxon>Shewanella</taxon>
    </lineage>
</organism>
<feature type="chain" id="PRO_0000407714" description="Phosphate propanoyltransferase">
    <location>
        <begin position="1"/>
        <end position="210"/>
    </location>
</feature>
<feature type="binding site" evidence="1">
    <location>
        <begin position="26"/>
        <end position="28"/>
    </location>
    <ligand>
        <name>CoA</name>
        <dbReference type="ChEBI" id="CHEBI:57287"/>
    </ligand>
</feature>
<feature type="binding site" evidence="1">
    <location>
        <position position="30"/>
    </location>
    <ligand>
        <name>Zn(2+)</name>
        <dbReference type="ChEBI" id="CHEBI:29105"/>
        <label>1</label>
    </ligand>
</feature>
<feature type="binding site" evidence="1">
    <location>
        <position position="32"/>
    </location>
    <ligand>
        <name>Zn(2+)</name>
        <dbReference type="ChEBI" id="CHEBI:29105"/>
        <label>1</label>
    </ligand>
</feature>
<feature type="binding site" evidence="1">
    <location>
        <position position="78"/>
    </location>
    <ligand>
        <name>CoA</name>
        <dbReference type="ChEBI" id="CHEBI:57287"/>
    </ligand>
</feature>
<feature type="binding site" evidence="1">
    <location>
        <position position="84"/>
    </location>
    <ligand>
        <name>phosphate</name>
        <dbReference type="ChEBI" id="CHEBI:43474"/>
    </ligand>
</feature>
<feature type="binding site" evidence="1">
    <location>
        <position position="90"/>
    </location>
    <ligand>
        <name>Zn(2+)</name>
        <dbReference type="ChEBI" id="CHEBI:29105"/>
        <label>1</label>
    </ligand>
</feature>
<feature type="binding site" evidence="1">
    <location>
        <position position="138"/>
    </location>
    <ligand>
        <name>Zn(2+)</name>
        <dbReference type="ChEBI" id="CHEBI:29105"/>
        <label>2</label>
    </ligand>
</feature>
<feature type="binding site" evidence="1">
    <location>
        <position position="140"/>
    </location>
    <ligand>
        <name>Zn(2+)</name>
        <dbReference type="ChEBI" id="CHEBI:29105"/>
        <label>2</label>
    </ligand>
</feature>
<feature type="binding site" evidence="1">
    <location>
        <position position="186"/>
    </location>
    <ligand>
        <name>Zn(2+)</name>
        <dbReference type="ChEBI" id="CHEBI:29105"/>
        <label>2</label>
    </ligand>
</feature>
<feature type="binding site" evidence="1">
    <location>
        <position position="193"/>
    </location>
    <ligand>
        <name>CoA</name>
        <dbReference type="ChEBI" id="CHEBI:57287"/>
    </ligand>
</feature>
<comment type="function">
    <text evidence="2">Involved in 1,2-propanediol (1,2-PD) utilization within the bacterial microcompartment (BMC) dedicated to 1,2-PD degradation by catalyzing the conversion of propanoyl-CoA to propanoyl-phosphate.</text>
</comment>
<comment type="catalytic activity">
    <reaction evidence="2">
        <text>propanoyl-CoA + phosphate = propanoyl phosphate + CoA</text>
        <dbReference type="Rhea" id="RHEA:28046"/>
        <dbReference type="ChEBI" id="CHEBI:43474"/>
        <dbReference type="ChEBI" id="CHEBI:57287"/>
        <dbReference type="ChEBI" id="CHEBI:57392"/>
        <dbReference type="ChEBI" id="CHEBI:58933"/>
        <dbReference type="EC" id="2.3.1.222"/>
    </reaction>
</comment>
<comment type="cofactor">
    <cofactor evidence="1">
        <name>Zn(2+)</name>
        <dbReference type="ChEBI" id="CHEBI:29105"/>
    </cofactor>
    <text evidence="1">There are 2 Zn(2+) ions per monomer; Zn(2+) and CoA bind inbetween the 2 domains in each monomer.</text>
</comment>
<comment type="pathway">
    <text>Polyol metabolism; 1,2-propanediol degradation.</text>
</comment>
<comment type="subcellular location">
    <subcellularLocation>
        <location evidence="2">Bacterial microcompartment</location>
    </subcellularLocation>
</comment>
<comment type="domain">
    <text evidence="1">Formed by 2 beta-barrels, each is capped on both ends by short alpha-helices.</text>
</comment>
<comment type="similarity">
    <text evidence="3">Belongs to the PduL family.</text>
</comment>
<name>PDUL_SHEPC</name>
<sequence>MDHDLITKLTGQVIAQMRQRTIPLGISNRHVHLSAKDYQSLFPGQTLKIKKPLGQPGQFAAEQTVSLIGPRGQLKNVRILGPLRGQTQVEISYTDARQIGLTAPLRLSGDLTGSVSVTLKSEAGEINLTEGVIIARRHIHMSPLDAAIFGVTQGETVKVGIEGTDRKLIFDDVCIRVAEDMRLEMHIDTDEANAAGIDGGQAVARLLLTKR</sequence>
<evidence type="ECO:0000250" key="1">
    <source>
        <dbReference type="UniProtKB" id="Q21A54"/>
    </source>
</evidence>
<evidence type="ECO:0000250" key="2">
    <source>
        <dbReference type="UniProtKB" id="Q9XDN5"/>
    </source>
</evidence>
<evidence type="ECO:0000305" key="3"/>
<dbReference type="EC" id="2.3.1.222"/>
<dbReference type="EMBL" id="CP000681">
    <property type="protein sequence ID" value="ABP73939.1"/>
    <property type="molecule type" value="Genomic_DNA"/>
</dbReference>
<dbReference type="SMR" id="A4Y1V6"/>
<dbReference type="STRING" id="319224.Sputcn32_0203"/>
<dbReference type="KEGG" id="spc:Sputcn32_0203"/>
<dbReference type="eggNOG" id="COG4869">
    <property type="taxonomic scope" value="Bacteria"/>
</dbReference>
<dbReference type="HOGENOM" id="CLU_080676_0_0_6"/>
<dbReference type="UniPathway" id="UPA00621"/>
<dbReference type="GO" id="GO:0031469">
    <property type="term" value="C:bacterial microcompartment"/>
    <property type="evidence" value="ECO:0007669"/>
    <property type="project" value="UniProtKB-SubCell"/>
</dbReference>
<dbReference type="GO" id="GO:0016747">
    <property type="term" value="F:acyltransferase activity, transferring groups other than amino-acyl groups"/>
    <property type="evidence" value="ECO:0007669"/>
    <property type="project" value="InterPro"/>
</dbReference>
<dbReference type="GO" id="GO:0046872">
    <property type="term" value="F:metal ion binding"/>
    <property type="evidence" value="ECO:0007669"/>
    <property type="project" value="UniProtKB-KW"/>
</dbReference>
<dbReference type="GO" id="GO:0051144">
    <property type="term" value="P:propanediol catabolic process"/>
    <property type="evidence" value="ECO:0007669"/>
    <property type="project" value="UniProtKB-UniPathway"/>
</dbReference>
<dbReference type="InterPro" id="IPR008300">
    <property type="entry name" value="PTAC"/>
</dbReference>
<dbReference type="NCBIfam" id="NF011652">
    <property type="entry name" value="PRK15070.1"/>
    <property type="match status" value="1"/>
</dbReference>
<dbReference type="PANTHER" id="PTHR39453">
    <property type="entry name" value="PHOSPHATE PROPANOYLTRANSFERASE"/>
    <property type="match status" value="1"/>
</dbReference>
<dbReference type="PANTHER" id="PTHR39453:SF1">
    <property type="entry name" value="PHOSPHATE PROPANOYLTRANSFERASE"/>
    <property type="match status" value="1"/>
</dbReference>
<dbReference type="Pfam" id="PF06130">
    <property type="entry name" value="PTAC"/>
    <property type="match status" value="1"/>
</dbReference>
<dbReference type="PIRSF" id="PIRSF010130">
    <property type="entry name" value="PduL"/>
    <property type="match status" value="1"/>
</dbReference>
<reference key="1">
    <citation type="submission" date="2007-04" db="EMBL/GenBank/DDBJ databases">
        <title>Complete sequence of Shewanella putrefaciens CN-32.</title>
        <authorList>
            <consortium name="US DOE Joint Genome Institute"/>
            <person name="Copeland A."/>
            <person name="Lucas S."/>
            <person name="Lapidus A."/>
            <person name="Barry K."/>
            <person name="Detter J.C."/>
            <person name="Glavina del Rio T."/>
            <person name="Hammon N."/>
            <person name="Israni S."/>
            <person name="Dalin E."/>
            <person name="Tice H."/>
            <person name="Pitluck S."/>
            <person name="Chain P."/>
            <person name="Malfatti S."/>
            <person name="Shin M."/>
            <person name="Vergez L."/>
            <person name="Schmutz J."/>
            <person name="Larimer F."/>
            <person name="Land M."/>
            <person name="Hauser L."/>
            <person name="Kyrpides N."/>
            <person name="Mikhailova N."/>
            <person name="Romine M.F."/>
            <person name="Fredrickson J."/>
            <person name="Tiedje J."/>
            <person name="Richardson P."/>
        </authorList>
    </citation>
    <scope>NUCLEOTIDE SEQUENCE [LARGE SCALE GENOMIC DNA]</scope>
    <source>
        <strain>CN-32 / ATCC BAA-453</strain>
    </source>
</reference>
<gene>
    <name type="primary">pduL</name>
    <name type="ordered locus">Sputcn32_0203</name>
</gene>